<keyword id="KW-0131">Cell cycle</keyword>
<keyword id="KW-0132">Cell division</keyword>
<keyword id="KW-1185">Reference proteome</keyword>
<comment type="function">
    <text evidence="1">Prevents the cell division inhibition by proteins MinC and MinD at internal division sites while permitting inhibition at polar sites. This ensures cell division at the proper site by restricting the formation of a division septum at the midpoint of the long axis of the cell.</text>
</comment>
<comment type="similarity">
    <text evidence="1">Belongs to the MinE family.</text>
</comment>
<evidence type="ECO:0000255" key="1">
    <source>
        <dbReference type="HAMAP-Rule" id="MF_00262"/>
    </source>
</evidence>
<gene>
    <name evidence="1" type="primary">minE</name>
    <name type="ordered locus">BAB2_0882</name>
</gene>
<sequence>MSIFRFFTRQQASAPQARERLQVLLAHERASYGGQSDLVAVLREEILAVIAKHIKVDREKVSVKMDRGDQVSTLEVDIELPLTAKKGRAA</sequence>
<feature type="chain" id="PRO_0000298084" description="Cell division topological specificity factor">
    <location>
        <begin position="1"/>
        <end position="90"/>
    </location>
</feature>
<protein>
    <recommendedName>
        <fullName evidence="1">Cell division topological specificity factor</fullName>
    </recommendedName>
</protein>
<organism>
    <name type="scientific">Brucella abortus (strain 2308)</name>
    <dbReference type="NCBI Taxonomy" id="359391"/>
    <lineage>
        <taxon>Bacteria</taxon>
        <taxon>Pseudomonadati</taxon>
        <taxon>Pseudomonadota</taxon>
        <taxon>Alphaproteobacteria</taxon>
        <taxon>Hyphomicrobiales</taxon>
        <taxon>Brucellaceae</taxon>
        <taxon>Brucella/Ochrobactrum group</taxon>
        <taxon>Brucella</taxon>
    </lineage>
</organism>
<reference key="1">
    <citation type="journal article" date="2005" name="Infect. Immun.">
        <title>Whole-genome analyses of speciation events in pathogenic Brucellae.</title>
        <authorList>
            <person name="Chain P.S."/>
            <person name="Comerci D.J."/>
            <person name="Tolmasky M.E."/>
            <person name="Larimer F.W."/>
            <person name="Malfatti S.A."/>
            <person name="Vergez L.M."/>
            <person name="Aguero F."/>
            <person name="Land M.L."/>
            <person name="Ugalde R.A."/>
            <person name="Garcia E."/>
        </authorList>
    </citation>
    <scope>NUCLEOTIDE SEQUENCE [LARGE SCALE GENOMIC DNA]</scope>
    <source>
        <strain>2308</strain>
    </source>
</reference>
<proteinExistence type="inferred from homology"/>
<dbReference type="EMBL" id="AM040265">
    <property type="protein sequence ID" value="CAJ13048.1"/>
    <property type="molecule type" value="Genomic_DNA"/>
</dbReference>
<dbReference type="RefSeq" id="WP_002966267.1">
    <property type="nucleotide sequence ID" value="NZ_KN046823.1"/>
</dbReference>
<dbReference type="SMR" id="Q2YK00"/>
<dbReference type="STRING" id="359391.BAB2_0882"/>
<dbReference type="GeneID" id="97535514"/>
<dbReference type="KEGG" id="bmf:BAB2_0882"/>
<dbReference type="PATRIC" id="fig|359391.11.peg.568"/>
<dbReference type="HOGENOM" id="CLU_137929_2_0_5"/>
<dbReference type="Proteomes" id="UP000002719">
    <property type="component" value="Chromosome II"/>
</dbReference>
<dbReference type="GO" id="GO:0051301">
    <property type="term" value="P:cell division"/>
    <property type="evidence" value="ECO:0007669"/>
    <property type="project" value="UniProtKB-KW"/>
</dbReference>
<dbReference type="GO" id="GO:0032955">
    <property type="term" value="P:regulation of division septum assembly"/>
    <property type="evidence" value="ECO:0007669"/>
    <property type="project" value="InterPro"/>
</dbReference>
<dbReference type="Gene3D" id="3.30.1070.10">
    <property type="entry name" value="Cell division topological specificity factor MinE"/>
    <property type="match status" value="1"/>
</dbReference>
<dbReference type="HAMAP" id="MF_00262">
    <property type="entry name" value="MinE"/>
    <property type="match status" value="1"/>
</dbReference>
<dbReference type="InterPro" id="IPR005527">
    <property type="entry name" value="MinE"/>
</dbReference>
<dbReference type="InterPro" id="IPR036707">
    <property type="entry name" value="MinE_sf"/>
</dbReference>
<dbReference type="NCBIfam" id="TIGR01215">
    <property type="entry name" value="minE"/>
    <property type="match status" value="1"/>
</dbReference>
<dbReference type="NCBIfam" id="NF001422">
    <property type="entry name" value="PRK00296.1"/>
    <property type="match status" value="1"/>
</dbReference>
<dbReference type="Pfam" id="PF03776">
    <property type="entry name" value="MinE"/>
    <property type="match status" value="1"/>
</dbReference>
<dbReference type="SUPFAM" id="SSF55229">
    <property type="entry name" value="Cell division protein MinE topological specificity domain"/>
    <property type="match status" value="1"/>
</dbReference>
<accession>Q2YK00</accession>
<name>MINE_BRUA2</name>